<reference key="1">
    <citation type="submission" date="2008-04" db="EMBL/GenBank/DDBJ databases">
        <title>Complete sequence of Clostridium botulinum strain Eklund.</title>
        <authorList>
            <person name="Brinkac L.M."/>
            <person name="Brown J.L."/>
            <person name="Bruce D."/>
            <person name="Detter C."/>
            <person name="Munk C."/>
            <person name="Smith L.A."/>
            <person name="Smith T.J."/>
            <person name="Sutton G."/>
            <person name="Brettin T.S."/>
        </authorList>
    </citation>
    <scope>NUCLEOTIDE SEQUENCE [LARGE SCALE GENOMIC DNA]</scope>
    <source>
        <strain>Eklund 17B / Type B</strain>
    </source>
</reference>
<gene>
    <name evidence="1" type="primary">leuC</name>
    <name type="ordered locus">CLL_A0322</name>
</gene>
<proteinExistence type="inferred from homology"/>
<protein>
    <recommendedName>
        <fullName evidence="1">3-isopropylmalate dehydratase large subunit</fullName>
        <ecNumber evidence="1">4.2.1.33</ecNumber>
    </recommendedName>
    <alternativeName>
        <fullName evidence="1">Alpha-IPM isomerase</fullName>
        <shortName evidence="1">IPMI</shortName>
    </alternativeName>
    <alternativeName>
        <fullName evidence="1">Isopropylmalate isomerase</fullName>
    </alternativeName>
</protein>
<name>LEUC_CLOBB</name>
<sequence length="419" mass="45311">MGMTMTQKILAAHAGLESVKAGQLIEVNLDLVLGNDITTPVAINEFKKFGVDKVFNKSQIAIVPDHFTPNKDIKAAEQVKYVREFSNKMGIENFFEVGEMGIEHCLLPEKGLVVAGDVVIGADSHTCTYGALGAFSTGIGSTDMAAGMATGQTWFKVPSAIKFILKNKPAKWVSGKDIILHIIGMIGVDGALYKSMEFVGDGLNYLSMDDRFTMANMAIEAGGKNGIFPVDDKTVEYLKEHTKKEWEVYKADEDAEYDEVIEIELNTLRPTVSFPHLPDNTRTIDNVGDIDIDQVVIGSCTNGRISDLRIARDILKGKKVKKGIRCIVIPGTQNIYLQALEEGIIKDLIEAGVVVSTPTCGPCLGGHMGILAKGERCVSTTNRNFVGRMGHVESEVYLASPAVAAASALTGKITDPELV</sequence>
<comment type="function">
    <text evidence="1">Catalyzes the isomerization between 2-isopropylmalate and 3-isopropylmalate, via the formation of 2-isopropylmaleate.</text>
</comment>
<comment type="catalytic activity">
    <reaction evidence="1">
        <text>(2R,3S)-3-isopropylmalate = (2S)-2-isopropylmalate</text>
        <dbReference type="Rhea" id="RHEA:32287"/>
        <dbReference type="ChEBI" id="CHEBI:1178"/>
        <dbReference type="ChEBI" id="CHEBI:35121"/>
        <dbReference type="EC" id="4.2.1.33"/>
    </reaction>
</comment>
<comment type="cofactor">
    <cofactor evidence="1">
        <name>[4Fe-4S] cluster</name>
        <dbReference type="ChEBI" id="CHEBI:49883"/>
    </cofactor>
    <text evidence="1">Binds 1 [4Fe-4S] cluster per subunit.</text>
</comment>
<comment type="pathway">
    <text evidence="1">Amino-acid biosynthesis; L-leucine biosynthesis; L-leucine from 3-methyl-2-oxobutanoate: step 2/4.</text>
</comment>
<comment type="subunit">
    <text evidence="1">Heterodimer of LeuC and LeuD.</text>
</comment>
<comment type="similarity">
    <text evidence="1">Belongs to the aconitase/IPM isomerase family. LeuC type 2 subfamily.</text>
</comment>
<accession>B2TIQ9</accession>
<feature type="chain" id="PRO_1000135727" description="3-isopropylmalate dehydratase large subunit">
    <location>
        <begin position="1"/>
        <end position="419"/>
    </location>
</feature>
<feature type="binding site" evidence="1">
    <location>
        <position position="300"/>
    </location>
    <ligand>
        <name>[4Fe-4S] cluster</name>
        <dbReference type="ChEBI" id="CHEBI:49883"/>
    </ligand>
</feature>
<feature type="binding site" evidence="1">
    <location>
        <position position="360"/>
    </location>
    <ligand>
        <name>[4Fe-4S] cluster</name>
        <dbReference type="ChEBI" id="CHEBI:49883"/>
    </ligand>
</feature>
<feature type="binding site" evidence="1">
    <location>
        <position position="363"/>
    </location>
    <ligand>
        <name>[4Fe-4S] cluster</name>
        <dbReference type="ChEBI" id="CHEBI:49883"/>
    </ligand>
</feature>
<organism>
    <name type="scientific">Clostridium botulinum (strain Eklund 17B / Type B)</name>
    <dbReference type="NCBI Taxonomy" id="935198"/>
    <lineage>
        <taxon>Bacteria</taxon>
        <taxon>Bacillati</taxon>
        <taxon>Bacillota</taxon>
        <taxon>Clostridia</taxon>
        <taxon>Eubacteriales</taxon>
        <taxon>Clostridiaceae</taxon>
        <taxon>Clostridium</taxon>
    </lineage>
</organism>
<dbReference type="EC" id="4.2.1.33" evidence="1"/>
<dbReference type="EMBL" id="CP001056">
    <property type="protein sequence ID" value="ACD23689.1"/>
    <property type="molecule type" value="Genomic_DNA"/>
</dbReference>
<dbReference type="SMR" id="B2TIQ9"/>
<dbReference type="KEGG" id="cbk:CLL_A0322"/>
<dbReference type="HOGENOM" id="CLU_006714_3_4_9"/>
<dbReference type="UniPathway" id="UPA00048">
    <property type="reaction ID" value="UER00071"/>
</dbReference>
<dbReference type="Proteomes" id="UP000001195">
    <property type="component" value="Chromosome"/>
</dbReference>
<dbReference type="GO" id="GO:0003861">
    <property type="term" value="F:3-isopropylmalate dehydratase activity"/>
    <property type="evidence" value="ECO:0007669"/>
    <property type="project" value="UniProtKB-UniRule"/>
</dbReference>
<dbReference type="GO" id="GO:0051539">
    <property type="term" value="F:4 iron, 4 sulfur cluster binding"/>
    <property type="evidence" value="ECO:0007669"/>
    <property type="project" value="UniProtKB-KW"/>
</dbReference>
<dbReference type="GO" id="GO:0046872">
    <property type="term" value="F:metal ion binding"/>
    <property type="evidence" value="ECO:0007669"/>
    <property type="project" value="UniProtKB-KW"/>
</dbReference>
<dbReference type="GO" id="GO:0009098">
    <property type="term" value="P:L-leucine biosynthetic process"/>
    <property type="evidence" value="ECO:0007669"/>
    <property type="project" value="UniProtKB-UniRule"/>
</dbReference>
<dbReference type="CDD" id="cd01583">
    <property type="entry name" value="IPMI"/>
    <property type="match status" value="1"/>
</dbReference>
<dbReference type="Gene3D" id="3.30.499.10">
    <property type="entry name" value="Aconitase, domain 3"/>
    <property type="match status" value="2"/>
</dbReference>
<dbReference type="HAMAP" id="MF_01027">
    <property type="entry name" value="LeuC_type2"/>
    <property type="match status" value="1"/>
</dbReference>
<dbReference type="InterPro" id="IPR015931">
    <property type="entry name" value="Acnase/IPM_dHydase_lsu_aba_1/3"/>
</dbReference>
<dbReference type="InterPro" id="IPR001030">
    <property type="entry name" value="Acoase/IPM_deHydtase_lsu_aba"/>
</dbReference>
<dbReference type="InterPro" id="IPR018136">
    <property type="entry name" value="Aconitase_4Fe-4S_BS"/>
</dbReference>
<dbReference type="InterPro" id="IPR036008">
    <property type="entry name" value="Aconitase_4Fe-4S_dom"/>
</dbReference>
<dbReference type="InterPro" id="IPR011826">
    <property type="entry name" value="HAcnase/IPMdehydase_lsu_prok"/>
</dbReference>
<dbReference type="InterPro" id="IPR006251">
    <property type="entry name" value="Homoacnase/IPMdehydase_lsu"/>
</dbReference>
<dbReference type="InterPro" id="IPR050067">
    <property type="entry name" value="IPM_dehydratase_rel_enz"/>
</dbReference>
<dbReference type="InterPro" id="IPR033941">
    <property type="entry name" value="IPMI_cat"/>
</dbReference>
<dbReference type="InterPro" id="IPR011823">
    <property type="entry name" value="IsopropMal_deHydtase_lsu_bac"/>
</dbReference>
<dbReference type="NCBIfam" id="TIGR01343">
    <property type="entry name" value="hacA_fam"/>
    <property type="match status" value="1"/>
</dbReference>
<dbReference type="NCBIfam" id="TIGR02086">
    <property type="entry name" value="IPMI_arch"/>
    <property type="match status" value="1"/>
</dbReference>
<dbReference type="NCBIfam" id="TIGR02083">
    <property type="entry name" value="LEU2"/>
    <property type="match status" value="1"/>
</dbReference>
<dbReference type="NCBIfam" id="NF001614">
    <property type="entry name" value="PRK00402.1"/>
    <property type="match status" value="1"/>
</dbReference>
<dbReference type="PANTHER" id="PTHR43822:SF16">
    <property type="entry name" value="3-ISOPROPYLMALATE DEHYDRATASE LARGE SUBUNIT 2"/>
    <property type="match status" value="1"/>
</dbReference>
<dbReference type="PANTHER" id="PTHR43822">
    <property type="entry name" value="HOMOACONITASE, MITOCHONDRIAL-RELATED"/>
    <property type="match status" value="1"/>
</dbReference>
<dbReference type="Pfam" id="PF00330">
    <property type="entry name" value="Aconitase"/>
    <property type="match status" value="2"/>
</dbReference>
<dbReference type="PRINTS" id="PR00415">
    <property type="entry name" value="ACONITASE"/>
</dbReference>
<dbReference type="SUPFAM" id="SSF53732">
    <property type="entry name" value="Aconitase iron-sulfur domain"/>
    <property type="match status" value="1"/>
</dbReference>
<dbReference type="PROSITE" id="PS00450">
    <property type="entry name" value="ACONITASE_1"/>
    <property type="match status" value="1"/>
</dbReference>
<dbReference type="PROSITE" id="PS01244">
    <property type="entry name" value="ACONITASE_2"/>
    <property type="match status" value="1"/>
</dbReference>
<evidence type="ECO:0000255" key="1">
    <source>
        <dbReference type="HAMAP-Rule" id="MF_01027"/>
    </source>
</evidence>
<keyword id="KW-0004">4Fe-4S</keyword>
<keyword id="KW-0028">Amino-acid biosynthesis</keyword>
<keyword id="KW-0100">Branched-chain amino acid biosynthesis</keyword>
<keyword id="KW-0408">Iron</keyword>
<keyword id="KW-0411">Iron-sulfur</keyword>
<keyword id="KW-0432">Leucine biosynthesis</keyword>
<keyword id="KW-0456">Lyase</keyword>
<keyword id="KW-0479">Metal-binding</keyword>